<sequence>MKFTPSIVIDAPQYYVDHFNGKYNVDKCVILRDLQLETDSESMPSSLKHLTKPTHILDLTNNDLIMIPDLSRRDDIHTLLLGRNNIVEVDGRLLPMNVQNLTLSNNSIRRFEDLQRLRRAPRTLKNLTLIGNQVCHLANYREHVLRLVPHLETLDFQNVTAEERKSAMSFPRQADGDTLGPVNTAIRDNGSRDKTMEIMNLVVSKMTVERRNELKKQLAEATSLEEIARLEKLLSGGV</sequence>
<dbReference type="EMBL" id="Z73569">
    <property type="protein sequence ID" value="CAA97928.1"/>
    <property type="molecule type" value="Genomic_DNA"/>
</dbReference>
<dbReference type="EMBL" id="AY558137">
    <property type="protein sequence ID" value="AAS56463.1"/>
    <property type="molecule type" value="Genomic_DNA"/>
</dbReference>
<dbReference type="EMBL" id="BK006949">
    <property type="protein sequence ID" value="DAA11223.1"/>
    <property type="molecule type" value="Genomic_DNA"/>
</dbReference>
<dbReference type="PIR" id="S65232">
    <property type="entry name" value="S65232"/>
</dbReference>
<dbReference type="RefSeq" id="NP_015111.1">
    <property type="nucleotide sequence ID" value="NM_001184027.1"/>
</dbReference>
<dbReference type="PDB" id="5GMK">
    <property type="method" value="EM"/>
    <property type="resolution" value="3.40 A"/>
    <property type="chains" value="b=1-238"/>
</dbReference>
<dbReference type="PDB" id="5LJ3">
    <property type="method" value="EM"/>
    <property type="resolution" value="3.80 A"/>
    <property type="chains" value="W=1-238"/>
</dbReference>
<dbReference type="PDB" id="5LJ5">
    <property type="method" value="EM"/>
    <property type="resolution" value="3.80 A"/>
    <property type="chains" value="W=1-238"/>
</dbReference>
<dbReference type="PDB" id="5MQ0">
    <property type="method" value="EM"/>
    <property type="resolution" value="4.17 A"/>
    <property type="chains" value="W=1-238"/>
</dbReference>
<dbReference type="PDB" id="5NRL">
    <property type="method" value="EM"/>
    <property type="resolution" value="7.20 A"/>
    <property type="chains" value="W=1-238"/>
</dbReference>
<dbReference type="PDB" id="5WSG">
    <property type="method" value="EM"/>
    <property type="resolution" value="4.00 A"/>
    <property type="chains" value="Y=1-238"/>
</dbReference>
<dbReference type="PDB" id="5Y88">
    <property type="method" value="EM"/>
    <property type="resolution" value="3.70 A"/>
    <property type="chains" value="o=1-238"/>
</dbReference>
<dbReference type="PDB" id="5YLZ">
    <property type="method" value="EM"/>
    <property type="resolution" value="3.60 A"/>
    <property type="chains" value="o=1-238"/>
</dbReference>
<dbReference type="PDB" id="5ZWM">
    <property type="method" value="EM"/>
    <property type="resolution" value="3.40 A"/>
    <property type="chains" value="o=1-238"/>
</dbReference>
<dbReference type="PDB" id="5ZWO">
    <property type="method" value="EM"/>
    <property type="resolution" value="3.90 A"/>
    <property type="chains" value="o=1-238"/>
</dbReference>
<dbReference type="PDB" id="6BK8">
    <property type="method" value="EM"/>
    <property type="resolution" value="3.30 A"/>
    <property type="chains" value="s=1-238"/>
</dbReference>
<dbReference type="PDB" id="6EXN">
    <property type="method" value="EM"/>
    <property type="resolution" value="3.70 A"/>
    <property type="chains" value="W=1-238"/>
</dbReference>
<dbReference type="PDB" id="6G90">
    <property type="method" value="EM"/>
    <property type="resolution" value="4.00 A"/>
    <property type="chains" value="W=1-238"/>
</dbReference>
<dbReference type="PDB" id="6J6G">
    <property type="method" value="EM"/>
    <property type="resolution" value="3.20 A"/>
    <property type="chains" value="b=1-238"/>
</dbReference>
<dbReference type="PDB" id="6J6H">
    <property type="method" value="EM"/>
    <property type="resolution" value="3.60 A"/>
    <property type="chains" value="b=1-238"/>
</dbReference>
<dbReference type="PDB" id="6J6N">
    <property type="method" value="EM"/>
    <property type="resolution" value="3.86 A"/>
    <property type="chains" value="b=1-238"/>
</dbReference>
<dbReference type="PDB" id="6J6Q">
    <property type="method" value="EM"/>
    <property type="resolution" value="3.70 A"/>
    <property type="chains" value="b=1-238"/>
</dbReference>
<dbReference type="PDB" id="7OQB">
    <property type="method" value="EM"/>
    <property type="resolution" value="9.00 A"/>
    <property type="chains" value="W=1-238"/>
</dbReference>
<dbReference type="PDB" id="7OQE">
    <property type="method" value="EM"/>
    <property type="resolution" value="5.90 A"/>
    <property type="chains" value="W=1-238"/>
</dbReference>
<dbReference type="PDB" id="9DTR">
    <property type="method" value="EM"/>
    <property type="resolution" value="2.31 A"/>
    <property type="chains" value="W=1-238"/>
</dbReference>
<dbReference type="PDBsum" id="5GMK"/>
<dbReference type="PDBsum" id="5LJ3"/>
<dbReference type="PDBsum" id="5LJ5"/>
<dbReference type="PDBsum" id="5MQ0"/>
<dbReference type="PDBsum" id="5NRL"/>
<dbReference type="PDBsum" id="5WSG"/>
<dbReference type="PDBsum" id="5Y88"/>
<dbReference type="PDBsum" id="5YLZ"/>
<dbReference type="PDBsum" id="5ZWM"/>
<dbReference type="PDBsum" id="5ZWO"/>
<dbReference type="PDBsum" id="6BK8"/>
<dbReference type="PDBsum" id="6EXN"/>
<dbReference type="PDBsum" id="6G90"/>
<dbReference type="PDBsum" id="6J6G"/>
<dbReference type="PDBsum" id="6J6H"/>
<dbReference type="PDBsum" id="6J6N"/>
<dbReference type="PDBsum" id="6J6Q"/>
<dbReference type="PDBsum" id="7OQB"/>
<dbReference type="PDBsum" id="7OQE"/>
<dbReference type="PDBsum" id="9DTR"/>
<dbReference type="EMDB" id="EMD-0686"/>
<dbReference type="EMDB" id="EMD-0687"/>
<dbReference type="EMDB" id="EMD-0691"/>
<dbReference type="EMDB" id="EMD-0692"/>
<dbReference type="EMDB" id="EMD-13028"/>
<dbReference type="EMDB" id="EMD-13033"/>
<dbReference type="EMDB" id="EMD-3541"/>
<dbReference type="EMDB" id="EMD-3683"/>
<dbReference type="EMDB" id="EMD-3979"/>
<dbReference type="EMDB" id="EMD-4055"/>
<dbReference type="EMDB" id="EMD-4057"/>
<dbReference type="EMDB" id="EMD-4364"/>
<dbReference type="EMDB" id="EMD-47157"/>
<dbReference type="EMDB" id="EMD-6817"/>
<dbReference type="EMDB" id="EMD-6839"/>
<dbReference type="EMDB" id="EMD-6972"/>
<dbReference type="EMDB" id="EMD-6974"/>
<dbReference type="EMDB" id="EMD-7109"/>
<dbReference type="EMDB" id="EMD-9525"/>
<dbReference type="SMR" id="Q08963"/>
<dbReference type="BioGRID" id="35972">
    <property type="interactions" value="700"/>
</dbReference>
<dbReference type="ComplexPortal" id="CPX-1651">
    <property type="entry name" value="PRP19-associated complex"/>
</dbReference>
<dbReference type="ComplexPortal" id="CPX-26">
    <property type="entry name" value="U2 small nuclear ribonucleoprotein complex"/>
</dbReference>
<dbReference type="DIP" id="DIP-2399N"/>
<dbReference type="FunCoup" id="Q08963">
    <property type="interactions" value="1540"/>
</dbReference>
<dbReference type="IntAct" id="Q08963">
    <property type="interactions" value="47"/>
</dbReference>
<dbReference type="MINT" id="Q08963"/>
<dbReference type="STRING" id="4932.YPL213W"/>
<dbReference type="iPTMnet" id="Q08963"/>
<dbReference type="PaxDb" id="4932-YPL213W"/>
<dbReference type="PeptideAtlas" id="Q08963"/>
<dbReference type="EnsemblFungi" id="YPL213W_mRNA">
    <property type="protein sequence ID" value="YPL213W"/>
    <property type="gene ID" value="YPL213W"/>
</dbReference>
<dbReference type="GeneID" id="855888"/>
<dbReference type="KEGG" id="sce:YPL213W"/>
<dbReference type="AGR" id="SGD:S000006134"/>
<dbReference type="SGD" id="S000006134">
    <property type="gene designation" value="LEA1"/>
</dbReference>
<dbReference type="VEuPathDB" id="FungiDB:YPL213W"/>
<dbReference type="eggNOG" id="KOG1644">
    <property type="taxonomic scope" value="Eukaryota"/>
</dbReference>
<dbReference type="GeneTree" id="ENSGT00940000153289"/>
<dbReference type="HOGENOM" id="CLU_061027_3_0_1"/>
<dbReference type="InParanoid" id="Q08963"/>
<dbReference type="OMA" id="CHLEDYR"/>
<dbReference type="OrthoDB" id="433501at2759"/>
<dbReference type="BioCyc" id="YEAST:G3O-34103-MONOMER"/>
<dbReference type="BioGRID-ORCS" id="855888">
    <property type="hits" value="0 hits in 10 CRISPR screens"/>
</dbReference>
<dbReference type="PRO" id="PR:Q08963"/>
<dbReference type="Proteomes" id="UP000002311">
    <property type="component" value="Chromosome XVI"/>
</dbReference>
<dbReference type="RNAct" id="Q08963">
    <property type="molecule type" value="protein"/>
</dbReference>
<dbReference type="GO" id="GO:0005737">
    <property type="term" value="C:cytoplasm"/>
    <property type="evidence" value="ECO:0007005"/>
    <property type="project" value="SGD"/>
</dbReference>
<dbReference type="GO" id="GO:0005634">
    <property type="term" value="C:nucleus"/>
    <property type="evidence" value="ECO:0000303"/>
    <property type="project" value="ComplexPortal"/>
</dbReference>
<dbReference type="GO" id="GO:0000974">
    <property type="term" value="C:Prp19 complex"/>
    <property type="evidence" value="ECO:0000353"/>
    <property type="project" value="ComplexPortal"/>
</dbReference>
<dbReference type="GO" id="GO:0005681">
    <property type="term" value="C:spliceosomal complex"/>
    <property type="evidence" value="ECO:0000303"/>
    <property type="project" value="ComplexPortal"/>
</dbReference>
<dbReference type="GO" id="GO:0005686">
    <property type="term" value="C:U2 snRNP"/>
    <property type="evidence" value="ECO:0000314"/>
    <property type="project" value="SGD"/>
</dbReference>
<dbReference type="GO" id="GO:0071004">
    <property type="term" value="C:U2-type prespliceosome"/>
    <property type="evidence" value="ECO:0000314"/>
    <property type="project" value="SGD"/>
</dbReference>
<dbReference type="GO" id="GO:0030620">
    <property type="term" value="F:U2 snRNA binding"/>
    <property type="evidence" value="ECO:0000318"/>
    <property type="project" value="GO_Central"/>
</dbReference>
<dbReference type="GO" id="GO:0000398">
    <property type="term" value="P:mRNA splicing, via spliceosome"/>
    <property type="evidence" value="ECO:0000315"/>
    <property type="project" value="SGD"/>
</dbReference>
<dbReference type="GO" id="GO:1903241">
    <property type="term" value="P:U2-type prespliceosome assembly"/>
    <property type="evidence" value="ECO:0000303"/>
    <property type="project" value="ComplexPortal"/>
</dbReference>
<dbReference type="FunFam" id="3.80.10.10:FF:000629">
    <property type="entry name" value="U2 snRNP component"/>
    <property type="match status" value="1"/>
</dbReference>
<dbReference type="Gene3D" id="3.80.10.10">
    <property type="entry name" value="Ribonuclease Inhibitor"/>
    <property type="match status" value="1"/>
</dbReference>
<dbReference type="InterPro" id="IPR001611">
    <property type="entry name" value="Leu-rich_rpt"/>
</dbReference>
<dbReference type="InterPro" id="IPR032675">
    <property type="entry name" value="LRR_dom_sf"/>
</dbReference>
<dbReference type="InterPro" id="IPR044640">
    <property type="entry name" value="RU2A"/>
</dbReference>
<dbReference type="InterPro" id="IPR003603">
    <property type="entry name" value="U2A'_phosphoprotein32A_C"/>
</dbReference>
<dbReference type="PANTHER" id="PTHR10552">
    <property type="entry name" value="U2 SMALL NUCLEAR RIBONUCLEOPROTEIN A"/>
    <property type="match status" value="1"/>
</dbReference>
<dbReference type="PANTHER" id="PTHR10552:SF6">
    <property type="entry name" value="U2 SMALL NUCLEAR RIBONUCLEOPROTEIN A"/>
    <property type="match status" value="1"/>
</dbReference>
<dbReference type="Pfam" id="PF14580">
    <property type="entry name" value="LRR_9"/>
    <property type="match status" value="1"/>
</dbReference>
<dbReference type="SMART" id="SM00446">
    <property type="entry name" value="LRRcap"/>
    <property type="match status" value="1"/>
</dbReference>
<dbReference type="SUPFAM" id="SSF52058">
    <property type="entry name" value="L domain-like"/>
    <property type="match status" value="1"/>
</dbReference>
<dbReference type="PROSITE" id="PS51450">
    <property type="entry name" value="LRR"/>
    <property type="match status" value="3"/>
</dbReference>
<gene>
    <name type="primary">LEA1</name>
    <name type="ordered locus">YPL213W</name>
</gene>
<reference key="1">
    <citation type="journal article" date="1997" name="Nature">
        <title>The nucleotide sequence of Saccharomyces cerevisiae chromosome XVI.</title>
        <authorList>
            <person name="Bussey H."/>
            <person name="Storms R.K."/>
            <person name="Ahmed A."/>
            <person name="Albermann K."/>
            <person name="Allen E."/>
            <person name="Ansorge W."/>
            <person name="Araujo R."/>
            <person name="Aparicio A."/>
            <person name="Barrell B.G."/>
            <person name="Badcock K."/>
            <person name="Benes V."/>
            <person name="Botstein D."/>
            <person name="Bowman S."/>
            <person name="Brueckner M."/>
            <person name="Carpenter J."/>
            <person name="Cherry J.M."/>
            <person name="Chung E."/>
            <person name="Churcher C.M."/>
            <person name="Coster F."/>
            <person name="Davis K."/>
            <person name="Davis R.W."/>
            <person name="Dietrich F.S."/>
            <person name="Delius H."/>
            <person name="DiPaolo T."/>
            <person name="Dubois E."/>
            <person name="Duesterhoeft A."/>
            <person name="Duncan M."/>
            <person name="Floeth M."/>
            <person name="Fortin N."/>
            <person name="Friesen J.D."/>
            <person name="Fritz C."/>
            <person name="Goffeau A."/>
            <person name="Hall J."/>
            <person name="Hebling U."/>
            <person name="Heumann K."/>
            <person name="Hilbert H."/>
            <person name="Hillier L.W."/>
            <person name="Hunicke-Smith S."/>
            <person name="Hyman R.W."/>
            <person name="Johnston M."/>
            <person name="Kalman S."/>
            <person name="Kleine K."/>
            <person name="Komp C."/>
            <person name="Kurdi O."/>
            <person name="Lashkari D."/>
            <person name="Lew H."/>
            <person name="Lin A."/>
            <person name="Lin D."/>
            <person name="Louis E.J."/>
            <person name="Marathe R."/>
            <person name="Messenguy F."/>
            <person name="Mewes H.-W."/>
            <person name="Mirtipati S."/>
            <person name="Moestl D."/>
            <person name="Mueller-Auer S."/>
            <person name="Namath A."/>
            <person name="Nentwich U."/>
            <person name="Oefner P."/>
            <person name="Pearson D."/>
            <person name="Petel F.X."/>
            <person name="Pohl T.M."/>
            <person name="Purnelle B."/>
            <person name="Rajandream M.A."/>
            <person name="Rechmann S."/>
            <person name="Rieger M."/>
            <person name="Riles L."/>
            <person name="Roberts D."/>
            <person name="Schaefer M."/>
            <person name="Scharfe M."/>
            <person name="Scherens B."/>
            <person name="Schramm S."/>
            <person name="Schroeder M."/>
            <person name="Sdicu A.-M."/>
            <person name="Tettelin H."/>
            <person name="Urrestarazu L.A."/>
            <person name="Ushinsky S."/>
            <person name="Vierendeels F."/>
            <person name="Vissers S."/>
            <person name="Voss H."/>
            <person name="Walsh S.V."/>
            <person name="Wambutt R."/>
            <person name="Wang Y."/>
            <person name="Wedler E."/>
            <person name="Wedler H."/>
            <person name="Winnett E."/>
            <person name="Zhong W.-W."/>
            <person name="Zollner A."/>
            <person name="Vo D.H."/>
            <person name="Hani J."/>
        </authorList>
    </citation>
    <scope>NUCLEOTIDE SEQUENCE [LARGE SCALE GENOMIC DNA]</scope>
    <source>
        <strain>ATCC 204508 / S288c</strain>
    </source>
</reference>
<reference key="2">
    <citation type="journal article" date="2014" name="G3 (Bethesda)">
        <title>The reference genome sequence of Saccharomyces cerevisiae: Then and now.</title>
        <authorList>
            <person name="Engel S.R."/>
            <person name="Dietrich F.S."/>
            <person name="Fisk D.G."/>
            <person name="Binkley G."/>
            <person name="Balakrishnan R."/>
            <person name="Costanzo M.C."/>
            <person name="Dwight S.S."/>
            <person name="Hitz B.C."/>
            <person name="Karra K."/>
            <person name="Nash R.S."/>
            <person name="Weng S."/>
            <person name="Wong E.D."/>
            <person name="Lloyd P."/>
            <person name="Skrzypek M.S."/>
            <person name="Miyasato S.R."/>
            <person name="Simison M."/>
            <person name="Cherry J.M."/>
        </authorList>
    </citation>
    <scope>GENOME REANNOTATION</scope>
    <source>
        <strain>ATCC 204508 / S288c</strain>
    </source>
</reference>
<reference key="3">
    <citation type="journal article" date="2007" name="Genome Res.">
        <title>Approaching a complete repository of sequence-verified protein-encoding clones for Saccharomyces cerevisiae.</title>
        <authorList>
            <person name="Hu Y."/>
            <person name="Rolfs A."/>
            <person name="Bhullar B."/>
            <person name="Murthy T.V.S."/>
            <person name="Zhu C."/>
            <person name="Berger M.F."/>
            <person name="Camargo A.A."/>
            <person name="Kelley F."/>
            <person name="McCarron S."/>
            <person name="Jepson D."/>
            <person name="Richardson A."/>
            <person name="Raphael J."/>
            <person name="Moreira D."/>
            <person name="Taycher E."/>
            <person name="Zuo D."/>
            <person name="Mohr S."/>
            <person name="Kane M.F."/>
            <person name="Williamson J."/>
            <person name="Simpson A.J.G."/>
            <person name="Bulyk M.L."/>
            <person name="Harlow E."/>
            <person name="Marsischky G."/>
            <person name="Kolodner R.D."/>
            <person name="LaBaer J."/>
        </authorList>
    </citation>
    <scope>NUCLEOTIDE SEQUENCE [GENOMIC DNA]</scope>
    <source>
        <strain>ATCC 204508 / S288c</strain>
    </source>
</reference>
<reference key="4">
    <citation type="journal article" date="1998" name="EMBO J.">
        <title>The yeast U2A'/U2B complex is required for pre-spliceosome formation.</title>
        <authorList>
            <person name="Caspary F."/>
            <person name="Seraphin B."/>
        </authorList>
    </citation>
    <scope>FUNCTION</scope>
    <scope>INTERACTION WITH MSL1</scope>
</reference>
<reference key="5">
    <citation type="journal article" date="2002" name="Mol. Cell. Biol.">
        <title>Proteomics analysis reveals stable multiprotein complexes in both fission and budding yeasts containing Myb-related Cdc5p/Cef1p, novel pre-mRNA splicing factors, and snRNAs.</title>
        <authorList>
            <person name="Ohi M.D."/>
            <person name="Link A.J."/>
            <person name="Ren L."/>
            <person name="Jennings J.L."/>
            <person name="McDonald W.H."/>
            <person name="Gould K.L."/>
        </authorList>
    </citation>
    <scope>IDENTIFICATION IN THE CWC COMPLEX</scope>
    <scope>IDENTIFICATION BY MASS SPECTROMETRY</scope>
</reference>
<reference key="6">
    <citation type="journal article" date="2003" name="Mol. Cell">
        <title>Assigning function to yeast proteins by integration of technologies.</title>
        <authorList>
            <person name="Hazbun T.R."/>
            <person name="Malmstroem L."/>
            <person name="Anderson S."/>
            <person name="Graczyk B.J."/>
            <person name="Fox B."/>
            <person name="Riffle M."/>
            <person name="Sundin B.A."/>
            <person name="Aranda J.D."/>
            <person name="McDonald W.H."/>
            <person name="Chiu C.-H."/>
            <person name="Snydsman B.E."/>
            <person name="Bradley P."/>
            <person name="Muller E.G.D."/>
            <person name="Fields S."/>
            <person name="Baker D."/>
            <person name="Yates J.R. III"/>
            <person name="Davis T.N."/>
        </authorList>
    </citation>
    <scope>IDENTIFICATION BY MASS SPECTROMETRY</scope>
</reference>
<reference key="7">
    <citation type="journal article" date="2003" name="Nature">
        <title>Global analysis of protein localization in budding yeast.</title>
        <authorList>
            <person name="Huh W.-K."/>
            <person name="Falvo J.V."/>
            <person name="Gerke L.C."/>
            <person name="Carroll A.S."/>
            <person name="Howson R.W."/>
            <person name="Weissman J.S."/>
            <person name="O'Shea E.K."/>
        </authorList>
    </citation>
    <scope>SUBCELLULAR LOCATION [LARGE SCALE ANALYSIS]</scope>
</reference>
<reference key="8">
    <citation type="journal article" date="2003" name="Nature">
        <title>Global analysis of protein expression in yeast.</title>
        <authorList>
            <person name="Ghaemmaghami S."/>
            <person name="Huh W.-K."/>
            <person name="Bower K."/>
            <person name="Howson R.W."/>
            <person name="Belle A."/>
            <person name="Dephoure N."/>
            <person name="O'Shea E.K."/>
            <person name="Weissman J.S."/>
        </authorList>
    </citation>
    <scope>LEVEL OF PROTEIN EXPRESSION [LARGE SCALE ANALYSIS]</scope>
</reference>
<feature type="chain" id="PRO_0000074189" description="U2 small nuclear ribonucleoprotein A'">
    <location>
        <begin position="1"/>
        <end position="238"/>
    </location>
</feature>
<feature type="repeat" description="LRR 1">
    <location>
        <begin position="53"/>
        <end position="74"/>
    </location>
</feature>
<feature type="repeat" description="LRR 2">
    <location>
        <begin position="75"/>
        <end position="95"/>
    </location>
</feature>
<feature type="repeat" description="LRR 3">
    <location>
        <begin position="97"/>
        <end position="118"/>
    </location>
</feature>
<feature type="domain" description="LRRCT">
    <location>
        <begin position="132"/>
        <end position="170"/>
    </location>
</feature>
<feature type="region of interest" description="Disordered" evidence="1">
    <location>
        <begin position="167"/>
        <end position="189"/>
    </location>
</feature>
<feature type="helix" evidence="10">
    <location>
        <begin position="5"/>
        <end position="10"/>
    </location>
</feature>
<feature type="strand" evidence="10">
    <location>
        <begin position="13"/>
        <end position="16"/>
    </location>
</feature>
<feature type="turn" evidence="10">
    <location>
        <begin position="18"/>
        <end position="20"/>
    </location>
</feature>
<feature type="strand" evidence="10">
    <location>
        <begin position="21"/>
        <end position="23"/>
    </location>
</feature>
<feature type="strand" evidence="10">
    <location>
        <begin position="26"/>
        <end position="30"/>
    </location>
</feature>
<feature type="strand" evidence="7">
    <location>
        <begin position="34"/>
        <end position="37"/>
    </location>
</feature>
<feature type="turn" evidence="10">
    <location>
        <begin position="40"/>
        <end position="42"/>
    </location>
</feature>
<feature type="helix" evidence="10">
    <location>
        <begin position="43"/>
        <end position="47"/>
    </location>
</feature>
<feature type="strand" evidence="10">
    <location>
        <begin position="56"/>
        <end position="58"/>
    </location>
</feature>
<feature type="strand" evidence="8">
    <location>
        <begin position="73"/>
        <end position="75"/>
    </location>
</feature>
<feature type="strand" evidence="10">
    <location>
        <begin position="78"/>
        <end position="80"/>
    </location>
</feature>
<feature type="strand" evidence="9">
    <location>
        <begin position="92"/>
        <end position="97"/>
    </location>
</feature>
<feature type="strand" evidence="10">
    <location>
        <begin position="100"/>
        <end position="102"/>
    </location>
</feature>
<feature type="helix" evidence="10">
    <location>
        <begin position="111"/>
        <end position="114"/>
    </location>
</feature>
<feature type="helix" evidence="10">
    <location>
        <begin position="115"/>
        <end position="119"/>
    </location>
</feature>
<feature type="helix" evidence="8">
    <location>
        <begin position="120"/>
        <end position="123"/>
    </location>
</feature>
<feature type="strand" evidence="10">
    <location>
        <begin position="126"/>
        <end position="128"/>
    </location>
</feature>
<feature type="helix" evidence="10">
    <location>
        <begin position="133"/>
        <end position="136"/>
    </location>
</feature>
<feature type="helix" evidence="10">
    <location>
        <begin position="140"/>
        <end position="147"/>
    </location>
</feature>
<feature type="strand" evidence="10">
    <location>
        <begin position="152"/>
        <end position="154"/>
    </location>
</feature>
<feature type="helix" evidence="10">
    <location>
        <begin position="161"/>
        <end position="167"/>
    </location>
</feature>
<protein>
    <recommendedName>
        <fullName>U2 small nuclear ribonucleoprotein A'</fullName>
        <shortName>U2 snRNP A'</shortName>
    </recommendedName>
    <alternativeName>
        <fullName>Looks exceptionally like U2A protein 1</fullName>
    </alternativeName>
</protein>
<organism>
    <name type="scientific">Saccharomyces cerevisiae (strain ATCC 204508 / S288c)</name>
    <name type="common">Baker's yeast</name>
    <dbReference type="NCBI Taxonomy" id="559292"/>
    <lineage>
        <taxon>Eukaryota</taxon>
        <taxon>Fungi</taxon>
        <taxon>Dikarya</taxon>
        <taxon>Ascomycota</taxon>
        <taxon>Saccharomycotina</taxon>
        <taxon>Saccharomycetes</taxon>
        <taxon>Saccharomycetales</taxon>
        <taxon>Saccharomycetaceae</taxon>
        <taxon>Saccharomyces</taxon>
    </lineage>
</organism>
<evidence type="ECO:0000256" key="1">
    <source>
        <dbReference type="SAM" id="MobiDB-lite"/>
    </source>
</evidence>
<evidence type="ECO:0000269" key="2">
    <source>
    </source>
</evidence>
<evidence type="ECO:0000269" key="3">
    <source>
    </source>
</evidence>
<evidence type="ECO:0000269" key="4">
    <source>
    </source>
</evidence>
<evidence type="ECO:0000269" key="5">
    <source>
    </source>
</evidence>
<evidence type="ECO:0000305" key="6"/>
<evidence type="ECO:0007829" key="7">
    <source>
        <dbReference type="PDB" id="5GMK"/>
    </source>
</evidence>
<evidence type="ECO:0007829" key="8">
    <source>
        <dbReference type="PDB" id="6BK8"/>
    </source>
</evidence>
<evidence type="ECO:0007829" key="9">
    <source>
        <dbReference type="PDB" id="6J6G"/>
    </source>
</evidence>
<evidence type="ECO:0007829" key="10">
    <source>
        <dbReference type="PDB" id="9DTR"/>
    </source>
</evidence>
<accession>Q08963</accession>
<accession>D6W3F7</accession>
<proteinExistence type="evidence at protein level"/>
<name>RU2A_YEAST</name>
<keyword id="KW-0002">3D-structure</keyword>
<keyword id="KW-0433">Leucine-rich repeat</keyword>
<keyword id="KW-0507">mRNA processing</keyword>
<keyword id="KW-0508">mRNA splicing</keyword>
<keyword id="KW-0539">Nucleus</keyword>
<keyword id="KW-1185">Reference proteome</keyword>
<keyword id="KW-0677">Repeat</keyword>
<keyword id="KW-0747">Spliceosome</keyword>
<comment type="function">
    <text evidence="5">Involved in pre-mRNA splicing. Associates to U2 snRNA in a MSL1 dependent manner and is required for normal accumulation of U2 snRNA. Required for the spliceosome assembly and the efficient addition of U2 snRNP onto the pre-mRNA.</text>
</comment>
<comment type="subunit">
    <text evidence="2 5">Belongs to the CWC complex (or CEF1-associated complex), a spliceosome sub-complex reminiscent of a late-stage spliceosome composed of the U2, U5 and U6 snRNAs and at least BUD13, BUD31, BRR2, CDC40, CEF1, CLF1, CUS1, CWC2, CWC15, CWC21, CWC22, CWC23, CWC24, CWC25, CWC27, ECM2, HSH155, IST3, ISY1, LEA1, MSL1, NTC20, PRP8, PRP9, PRP11, PRP19, PRP21, PRP22, PRP45, PRP46, SLU7, SMB1, SMD1, SMD2, SMD3, SMX2, SMX3, SNT309, SNU114, SPP2, SYF1, SYF2, RSE1 and YJU2. Interacts with MSL1.</text>
</comment>
<comment type="subcellular location">
    <subcellularLocation>
        <location evidence="3">Nucleus</location>
    </subcellularLocation>
</comment>
<comment type="miscellaneous">
    <text evidence="4">Present with 3630 molecules/cell in log phase SD medium.</text>
</comment>
<comment type="similarity">
    <text evidence="6">Belongs to the U2 small nuclear ribonucleoprotein A family.</text>
</comment>